<protein>
    <recommendedName>
        <fullName evidence="1">Calcium uptake protein, mitochondrial</fullName>
    </recommendedName>
    <alternativeName>
        <fullName evidence="5">Mitochondrial calcium uniporter</fullName>
    </alternativeName>
</protein>
<accession>Q9SZ45</accession>
<accession>A8MRL1</accession>
<proteinExistence type="evidence at transcript level"/>
<dbReference type="EMBL" id="AL021636">
    <property type="protein sequence ID" value="CAA16584.1"/>
    <property type="molecule type" value="Genomic_DNA"/>
</dbReference>
<dbReference type="EMBL" id="AL161580">
    <property type="protein sequence ID" value="CAB79924.1"/>
    <property type="molecule type" value="Genomic_DNA"/>
</dbReference>
<dbReference type="EMBL" id="CP002687">
    <property type="protein sequence ID" value="AEE85999.1"/>
    <property type="molecule type" value="Genomic_DNA"/>
</dbReference>
<dbReference type="EMBL" id="CP002687">
    <property type="protein sequence ID" value="AEE86000.1"/>
    <property type="molecule type" value="Genomic_DNA"/>
</dbReference>
<dbReference type="EMBL" id="AY072163">
    <property type="protein sequence ID" value="AAL59985.1"/>
    <property type="molecule type" value="mRNA"/>
</dbReference>
<dbReference type="EMBL" id="AY122982">
    <property type="protein sequence ID" value="AAM67515.1"/>
    <property type="molecule type" value="mRNA"/>
</dbReference>
<dbReference type="PIR" id="T04640">
    <property type="entry name" value="T04640"/>
</dbReference>
<dbReference type="RefSeq" id="NP_001078476.1">
    <molecule id="Q9SZ45-2"/>
    <property type="nucleotide sequence ID" value="NM_001085007.1"/>
</dbReference>
<dbReference type="RefSeq" id="NP_194934.1">
    <molecule id="Q9SZ45-1"/>
    <property type="nucleotide sequence ID" value="NM_119358.4"/>
</dbReference>
<dbReference type="SMR" id="Q9SZ45"/>
<dbReference type="FunCoup" id="Q9SZ45">
    <property type="interactions" value="2481"/>
</dbReference>
<dbReference type="STRING" id="3702.Q9SZ45"/>
<dbReference type="GlyGen" id="Q9SZ45">
    <property type="glycosylation" value="1 site"/>
</dbReference>
<dbReference type="PaxDb" id="3702-AT4G32060.1"/>
<dbReference type="ProteomicsDB" id="250931">
    <molecule id="Q9SZ45-1"/>
</dbReference>
<dbReference type="EnsemblPlants" id="AT4G32060.1">
    <molecule id="Q9SZ45-1"/>
    <property type="protein sequence ID" value="AT4G32060.1"/>
    <property type="gene ID" value="AT4G32060"/>
</dbReference>
<dbReference type="EnsemblPlants" id="AT4G32060.2">
    <molecule id="Q9SZ45-2"/>
    <property type="protein sequence ID" value="AT4G32060.2"/>
    <property type="gene ID" value="AT4G32060"/>
</dbReference>
<dbReference type="GeneID" id="829337"/>
<dbReference type="Gramene" id="AT4G32060.1">
    <molecule id="Q9SZ45-1"/>
    <property type="protein sequence ID" value="AT4G32060.1"/>
    <property type="gene ID" value="AT4G32060"/>
</dbReference>
<dbReference type="Gramene" id="AT4G32060.2">
    <molecule id="Q9SZ45-2"/>
    <property type="protein sequence ID" value="AT4G32060.2"/>
    <property type="gene ID" value="AT4G32060"/>
</dbReference>
<dbReference type="KEGG" id="ath:AT4G32060"/>
<dbReference type="Araport" id="AT4G32060"/>
<dbReference type="TAIR" id="AT4G32060">
    <property type="gene designation" value="MICU"/>
</dbReference>
<dbReference type="eggNOG" id="KOG2643">
    <property type="taxonomic scope" value="Eukaryota"/>
</dbReference>
<dbReference type="HOGENOM" id="CLU_027103_2_0_1"/>
<dbReference type="InParanoid" id="Q9SZ45"/>
<dbReference type="OMA" id="YPEYMFF"/>
<dbReference type="PhylomeDB" id="Q9SZ45"/>
<dbReference type="PRO" id="PR:Q9SZ45"/>
<dbReference type="Proteomes" id="UP000006548">
    <property type="component" value="Chromosome 4"/>
</dbReference>
<dbReference type="ExpressionAtlas" id="Q9SZ45">
    <property type="expression patterns" value="baseline and differential"/>
</dbReference>
<dbReference type="GO" id="GO:0005743">
    <property type="term" value="C:mitochondrial inner membrane"/>
    <property type="evidence" value="ECO:0007669"/>
    <property type="project" value="UniProtKB-SubCell"/>
</dbReference>
<dbReference type="GO" id="GO:0005758">
    <property type="term" value="C:mitochondrial intermembrane space"/>
    <property type="evidence" value="ECO:0007669"/>
    <property type="project" value="UniProtKB-SubCell"/>
</dbReference>
<dbReference type="GO" id="GO:0005739">
    <property type="term" value="C:mitochondrion"/>
    <property type="evidence" value="ECO:0000314"/>
    <property type="project" value="TAIR"/>
</dbReference>
<dbReference type="GO" id="GO:0005509">
    <property type="term" value="F:calcium ion binding"/>
    <property type="evidence" value="ECO:0000314"/>
    <property type="project" value="TAIR"/>
</dbReference>
<dbReference type="GO" id="GO:0006816">
    <property type="term" value="P:calcium ion transport"/>
    <property type="evidence" value="ECO:0000314"/>
    <property type="project" value="TAIR"/>
</dbReference>
<dbReference type="GO" id="GO:0006851">
    <property type="term" value="P:mitochondrial calcium ion transmembrane transport"/>
    <property type="evidence" value="ECO:0007669"/>
    <property type="project" value="InterPro"/>
</dbReference>
<dbReference type="GO" id="GO:0051562">
    <property type="term" value="P:negative regulation of mitochondrial calcium ion concentration"/>
    <property type="evidence" value="ECO:0000315"/>
    <property type="project" value="TAIR"/>
</dbReference>
<dbReference type="CDD" id="cd00051">
    <property type="entry name" value="EFh"/>
    <property type="match status" value="1"/>
</dbReference>
<dbReference type="CDD" id="cd15900">
    <property type="entry name" value="EFh_MICU"/>
    <property type="match status" value="1"/>
</dbReference>
<dbReference type="FunFam" id="1.10.238.10:FF:000827">
    <property type="entry name" value="Calcium-binding EF hand family protein"/>
    <property type="match status" value="1"/>
</dbReference>
<dbReference type="Gene3D" id="1.10.238.10">
    <property type="entry name" value="EF-hand"/>
    <property type="match status" value="3"/>
</dbReference>
<dbReference type="InterPro" id="IPR011992">
    <property type="entry name" value="EF-hand-dom_pair"/>
</dbReference>
<dbReference type="InterPro" id="IPR018247">
    <property type="entry name" value="EF_Hand_1_Ca_BS"/>
</dbReference>
<dbReference type="InterPro" id="IPR002048">
    <property type="entry name" value="EF_hand_dom"/>
</dbReference>
<dbReference type="InterPro" id="IPR039800">
    <property type="entry name" value="MICU1/2/3"/>
</dbReference>
<dbReference type="PANTHER" id="PTHR12294:SF23">
    <property type="entry name" value="CALCIUM UPTAKE PROTEIN, MITOCHONDRIAL"/>
    <property type="match status" value="1"/>
</dbReference>
<dbReference type="PANTHER" id="PTHR12294">
    <property type="entry name" value="EF HAND DOMAIN FAMILY A1,A2-RELATED"/>
    <property type="match status" value="1"/>
</dbReference>
<dbReference type="Pfam" id="PF00036">
    <property type="entry name" value="EF-hand_1"/>
    <property type="match status" value="1"/>
</dbReference>
<dbReference type="Pfam" id="PF13202">
    <property type="entry name" value="EF-hand_5"/>
    <property type="match status" value="1"/>
</dbReference>
<dbReference type="Pfam" id="PF13833">
    <property type="entry name" value="EF-hand_8"/>
    <property type="match status" value="1"/>
</dbReference>
<dbReference type="SMART" id="SM00054">
    <property type="entry name" value="EFh"/>
    <property type="match status" value="3"/>
</dbReference>
<dbReference type="SUPFAM" id="SSF47473">
    <property type="entry name" value="EF-hand"/>
    <property type="match status" value="2"/>
</dbReference>
<dbReference type="PROSITE" id="PS00018">
    <property type="entry name" value="EF_HAND_1"/>
    <property type="match status" value="3"/>
</dbReference>
<dbReference type="PROSITE" id="PS50222">
    <property type="entry name" value="EF_HAND_2"/>
    <property type="match status" value="4"/>
</dbReference>
<gene>
    <name evidence="5" type="primary">MICU</name>
    <name evidence="7" type="ordered locus">At4g32060</name>
    <name evidence="8" type="ORF">F10N7.140</name>
</gene>
<organism>
    <name type="scientific">Arabidopsis thaliana</name>
    <name type="common">Mouse-ear cress</name>
    <dbReference type="NCBI Taxonomy" id="3702"/>
    <lineage>
        <taxon>Eukaryota</taxon>
        <taxon>Viridiplantae</taxon>
        <taxon>Streptophyta</taxon>
        <taxon>Embryophyta</taxon>
        <taxon>Tracheophyta</taxon>
        <taxon>Spermatophyta</taxon>
        <taxon>Magnoliopsida</taxon>
        <taxon>eudicotyledons</taxon>
        <taxon>Gunneridae</taxon>
        <taxon>Pentapetalae</taxon>
        <taxon>rosids</taxon>
        <taxon>malvids</taxon>
        <taxon>Brassicales</taxon>
        <taxon>Brassicaceae</taxon>
        <taxon>Camelineae</taxon>
        <taxon>Arabidopsis</taxon>
    </lineage>
</organism>
<keyword id="KW-0025">Alternative splicing</keyword>
<keyword id="KW-0106">Calcium</keyword>
<keyword id="KW-0109">Calcium transport</keyword>
<keyword id="KW-0406">Ion transport</keyword>
<keyword id="KW-0472">Membrane</keyword>
<keyword id="KW-0479">Metal-binding</keyword>
<keyword id="KW-0496">Mitochondrion</keyword>
<keyword id="KW-0999">Mitochondrion inner membrane</keyword>
<keyword id="KW-1185">Reference proteome</keyword>
<keyword id="KW-0677">Repeat</keyword>
<keyword id="KW-0809">Transit peptide</keyword>
<keyword id="KW-0813">Transport</keyword>
<reference key="1">
    <citation type="journal article" date="1999" name="Nature">
        <title>Sequence and analysis of chromosome 4 of the plant Arabidopsis thaliana.</title>
        <authorList>
            <person name="Mayer K.F.X."/>
            <person name="Schueller C."/>
            <person name="Wambutt R."/>
            <person name="Murphy G."/>
            <person name="Volckaert G."/>
            <person name="Pohl T."/>
            <person name="Duesterhoeft A."/>
            <person name="Stiekema W."/>
            <person name="Entian K.-D."/>
            <person name="Terryn N."/>
            <person name="Harris B."/>
            <person name="Ansorge W."/>
            <person name="Brandt P."/>
            <person name="Grivell L.A."/>
            <person name="Rieger M."/>
            <person name="Weichselgartner M."/>
            <person name="de Simone V."/>
            <person name="Obermaier B."/>
            <person name="Mache R."/>
            <person name="Mueller M."/>
            <person name="Kreis M."/>
            <person name="Delseny M."/>
            <person name="Puigdomenech P."/>
            <person name="Watson M."/>
            <person name="Schmidtheini T."/>
            <person name="Reichert B."/>
            <person name="Portetelle D."/>
            <person name="Perez-Alonso M."/>
            <person name="Boutry M."/>
            <person name="Bancroft I."/>
            <person name="Vos P."/>
            <person name="Hoheisel J."/>
            <person name="Zimmermann W."/>
            <person name="Wedler H."/>
            <person name="Ridley P."/>
            <person name="Langham S.-A."/>
            <person name="McCullagh B."/>
            <person name="Bilham L."/>
            <person name="Robben J."/>
            <person name="van der Schueren J."/>
            <person name="Grymonprez B."/>
            <person name="Chuang Y.-J."/>
            <person name="Vandenbussche F."/>
            <person name="Braeken M."/>
            <person name="Weltjens I."/>
            <person name="Voet M."/>
            <person name="Bastiaens I."/>
            <person name="Aert R."/>
            <person name="Defoor E."/>
            <person name="Weitzenegger T."/>
            <person name="Bothe G."/>
            <person name="Ramsperger U."/>
            <person name="Hilbert H."/>
            <person name="Braun M."/>
            <person name="Holzer E."/>
            <person name="Brandt A."/>
            <person name="Peters S."/>
            <person name="van Staveren M."/>
            <person name="Dirkse W."/>
            <person name="Mooijman P."/>
            <person name="Klein Lankhorst R."/>
            <person name="Rose M."/>
            <person name="Hauf J."/>
            <person name="Koetter P."/>
            <person name="Berneiser S."/>
            <person name="Hempel S."/>
            <person name="Feldpausch M."/>
            <person name="Lamberth S."/>
            <person name="Van den Daele H."/>
            <person name="De Keyser A."/>
            <person name="Buysshaert C."/>
            <person name="Gielen J."/>
            <person name="Villarroel R."/>
            <person name="De Clercq R."/>
            <person name="van Montagu M."/>
            <person name="Rogers J."/>
            <person name="Cronin A."/>
            <person name="Quail M.A."/>
            <person name="Bray-Allen S."/>
            <person name="Clark L."/>
            <person name="Doggett J."/>
            <person name="Hall S."/>
            <person name="Kay M."/>
            <person name="Lennard N."/>
            <person name="McLay K."/>
            <person name="Mayes R."/>
            <person name="Pettett A."/>
            <person name="Rajandream M.A."/>
            <person name="Lyne M."/>
            <person name="Benes V."/>
            <person name="Rechmann S."/>
            <person name="Borkova D."/>
            <person name="Bloecker H."/>
            <person name="Scharfe M."/>
            <person name="Grimm M."/>
            <person name="Loehnert T.-H."/>
            <person name="Dose S."/>
            <person name="de Haan M."/>
            <person name="Maarse A.C."/>
            <person name="Schaefer M."/>
            <person name="Mueller-Auer S."/>
            <person name="Gabel C."/>
            <person name="Fuchs M."/>
            <person name="Fartmann B."/>
            <person name="Granderath K."/>
            <person name="Dauner D."/>
            <person name="Herzl A."/>
            <person name="Neumann S."/>
            <person name="Argiriou A."/>
            <person name="Vitale D."/>
            <person name="Liguori R."/>
            <person name="Piravandi E."/>
            <person name="Massenet O."/>
            <person name="Quigley F."/>
            <person name="Clabauld G."/>
            <person name="Muendlein A."/>
            <person name="Felber R."/>
            <person name="Schnabl S."/>
            <person name="Hiller R."/>
            <person name="Schmidt W."/>
            <person name="Lecharny A."/>
            <person name="Aubourg S."/>
            <person name="Chefdor F."/>
            <person name="Cooke R."/>
            <person name="Berger C."/>
            <person name="Monfort A."/>
            <person name="Casacuberta E."/>
            <person name="Gibbons T."/>
            <person name="Weber N."/>
            <person name="Vandenbol M."/>
            <person name="Bargues M."/>
            <person name="Terol J."/>
            <person name="Torres A."/>
            <person name="Perez-Perez A."/>
            <person name="Purnelle B."/>
            <person name="Bent E."/>
            <person name="Johnson S."/>
            <person name="Tacon D."/>
            <person name="Jesse T."/>
            <person name="Heijnen L."/>
            <person name="Schwarz S."/>
            <person name="Scholler P."/>
            <person name="Heber S."/>
            <person name="Francs P."/>
            <person name="Bielke C."/>
            <person name="Frishman D."/>
            <person name="Haase D."/>
            <person name="Lemcke K."/>
            <person name="Mewes H.-W."/>
            <person name="Stocker S."/>
            <person name="Zaccaria P."/>
            <person name="Bevan M."/>
            <person name="Wilson R.K."/>
            <person name="de la Bastide M."/>
            <person name="Habermann K."/>
            <person name="Parnell L."/>
            <person name="Dedhia N."/>
            <person name="Gnoj L."/>
            <person name="Schutz K."/>
            <person name="Huang E."/>
            <person name="Spiegel L."/>
            <person name="Sekhon M."/>
            <person name="Murray J."/>
            <person name="Sheet P."/>
            <person name="Cordes M."/>
            <person name="Abu-Threideh J."/>
            <person name="Stoneking T."/>
            <person name="Kalicki J."/>
            <person name="Graves T."/>
            <person name="Harmon G."/>
            <person name="Edwards J."/>
            <person name="Latreille P."/>
            <person name="Courtney L."/>
            <person name="Cloud J."/>
            <person name="Abbott A."/>
            <person name="Scott K."/>
            <person name="Johnson D."/>
            <person name="Minx P."/>
            <person name="Bentley D."/>
            <person name="Fulton B."/>
            <person name="Miller N."/>
            <person name="Greco T."/>
            <person name="Kemp K."/>
            <person name="Kramer J."/>
            <person name="Fulton L."/>
            <person name="Mardis E."/>
            <person name="Dante M."/>
            <person name="Pepin K."/>
            <person name="Hillier L.W."/>
            <person name="Nelson J."/>
            <person name="Spieth J."/>
            <person name="Ryan E."/>
            <person name="Andrews S."/>
            <person name="Geisel C."/>
            <person name="Layman D."/>
            <person name="Du H."/>
            <person name="Ali J."/>
            <person name="Berghoff A."/>
            <person name="Jones K."/>
            <person name="Drone K."/>
            <person name="Cotton M."/>
            <person name="Joshu C."/>
            <person name="Antonoiu B."/>
            <person name="Zidanic M."/>
            <person name="Strong C."/>
            <person name="Sun H."/>
            <person name="Lamar B."/>
            <person name="Yordan C."/>
            <person name="Ma P."/>
            <person name="Zhong J."/>
            <person name="Preston R."/>
            <person name="Vil D."/>
            <person name="Shekher M."/>
            <person name="Matero A."/>
            <person name="Shah R."/>
            <person name="Swaby I.K."/>
            <person name="O'Shaughnessy A."/>
            <person name="Rodriguez M."/>
            <person name="Hoffman J."/>
            <person name="Till S."/>
            <person name="Granat S."/>
            <person name="Shohdy N."/>
            <person name="Hasegawa A."/>
            <person name="Hameed A."/>
            <person name="Lodhi M."/>
            <person name="Johnson A."/>
            <person name="Chen E."/>
            <person name="Marra M.A."/>
            <person name="Martienssen R."/>
            <person name="McCombie W.R."/>
        </authorList>
    </citation>
    <scope>NUCLEOTIDE SEQUENCE [LARGE SCALE GENOMIC DNA]</scope>
    <source>
        <strain>cv. Columbia</strain>
    </source>
</reference>
<reference key="2">
    <citation type="journal article" date="2017" name="Plant J.">
        <title>Araport11: a complete reannotation of the Arabidopsis thaliana reference genome.</title>
        <authorList>
            <person name="Cheng C.Y."/>
            <person name="Krishnakumar V."/>
            <person name="Chan A.P."/>
            <person name="Thibaud-Nissen F."/>
            <person name="Schobel S."/>
            <person name="Town C.D."/>
        </authorList>
    </citation>
    <scope>GENOME REANNOTATION</scope>
    <source>
        <strain>cv. Columbia</strain>
    </source>
</reference>
<reference key="3">
    <citation type="journal article" date="2003" name="Science">
        <title>Empirical analysis of transcriptional activity in the Arabidopsis genome.</title>
        <authorList>
            <person name="Yamada K."/>
            <person name="Lim J."/>
            <person name="Dale J.M."/>
            <person name="Chen H."/>
            <person name="Shinn P."/>
            <person name="Palm C.J."/>
            <person name="Southwick A.M."/>
            <person name="Wu H.C."/>
            <person name="Kim C.J."/>
            <person name="Nguyen M."/>
            <person name="Pham P.K."/>
            <person name="Cheuk R.F."/>
            <person name="Karlin-Newmann G."/>
            <person name="Liu S.X."/>
            <person name="Lam B."/>
            <person name="Sakano H."/>
            <person name="Wu T."/>
            <person name="Yu G."/>
            <person name="Miranda M."/>
            <person name="Quach H.L."/>
            <person name="Tripp M."/>
            <person name="Chang C.H."/>
            <person name="Lee J.M."/>
            <person name="Toriumi M.J."/>
            <person name="Chan M.M."/>
            <person name="Tang C.C."/>
            <person name="Onodera C.S."/>
            <person name="Deng J.M."/>
            <person name="Akiyama K."/>
            <person name="Ansari Y."/>
            <person name="Arakawa T."/>
            <person name="Banh J."/>
            <person name="Banno F."/>
            <person name="Bowser L."/>
            <person name="Brooks S.Y."/>
            <person name="Carninci P."/>
            <person name="Chao Q."/>
            <person name="Choy N."/>
            <person name="Enju A."/>
            <person name="Goldsmith A.D."/>
            <person name="Gurjal M."/>
            <person name="Hansen N.F."/>
            <person name="Hayashizaki Y."/>
            <person name="Johnson-Hopson C."/>
            <person name="Hsuan V.W."/>
            <person name="Iida K."/>
            <person name="Karnes M."/>
            <person name="Khan S."/>
            <person name="Koesema E."/>
            <person name="Ishida J."/>
            <person name="Jiang P.X."/>
            <person name="Jones T."/>
            <person name="Kawai J."/>
            <person name="Kamiya A."/>
            <person name="Meyers C."/>
            <person name="Nakajima M."/>
            <person name="Narusaka M."/>
            <person name="Seki M."/>
            <person name="Sakurai T."/>
            <person name="Satou M."/>
            <person name="Tamse R."/>
            <person name="Vaysberg M."/>
            <person name="Wallender E.K."/>
            <person name="Wong C."/>
            <person name="Yamamura Y."/>
            <person name="Yuan S."/>
            <person name="Shinozaki K."/>
            <person name="Davis R.W."/>
            <person name="Theologis A."/>
            <person name="Ecker J.R."/>
        </authorList>
    </citation>
    <scope>NUCLEOTIDE SEQUENCE [LARGE SCALE MRNA] (ISOFORM 1)</scope>
    <source>
        <strain>cv. Columbia</strain>
    </source>
</reference>
<reference key="4">
    <citation type="journal article" date="2015" name="Plant Cell">
        <title>The EF-hand Ca2+ binding protein MICU choreographs mitochondrial Ca2+ dynamics in Arabidopsis.</title>
        <authorList>
            <person name="Wagner S."/>
            <person name="Behera S."/>
            <person name="De Bortoli S."/>
            <person name="Logan D.C."/>
            <person name="Fuchs P."/>
            <person name="Carraretto L."/>
            <person name="Teardo E."/>
            <person name="Cendron L."/>
            <person name="Nietzel T."/>
            <person name="Fuessl M."/>
            <person name="Doccula F.G."/>
            <person name="Navazio L."/>
            <person name="Fricker M.D."/>
            <person name="Van Aken O."/>
            <person name="Finkemeier I."/>
            <person name="Meyer A.J."/>
            <person name="Szabo I."/>
            <person name="Costa A."/>
            <person name="Schwarzlaender M."/>
        </authorList>
    </citation>
    <scope>FUNCTION</scope>
    <scope>SUBCELLULAR LOCATION</scope>
    <scope>DOMAIN</scope>
    <scope>ALTERNATIVE SPLICING</scope>
    <scope>TISSUE SPECIFICITY</scope>
    <scope>DISRUPTION PHENOTYPE</scope>
</reference>
<comment type="function">
    <text evidence="4">Calcium-binding protein maintaining matrix calcium levels at low concentration. Regulates mitochondrial calcium dynamics in planta by restricting influx.</text>
</comment>
<comment type="subcellular location">
    <subcellularLocation>
        <location evidence="4">Mitochondrion inner membrane</location>
    </subcellularLocation>
    <subcellularLocation>
        <location evidence="4">Mitochondrion intermembrane space</location>
    </subcellularLocation>
    <text evidence="4">Located at the inner mitochondrial membrane and/or in the intermembrane space.</text>
</comment>
<comment type="alternative products">
    <event type="alternative splicing"/>
    <isoform>
        <id>Q9SZ45-1</id>
        <name>1</name>
        <sequence type="displayed"/>
    </isoform>
    <isoform>
        <id>Q9SZ45-2</id>
        <name>2</name>
        <sequence type="described" ref="VSP_058723 VSP_058724"/>
    </isoform>
</comment>
<comment type="tissue specificity">
    <text evidence="4">Expressed in both green and non-green tissues, including roots, shoots, floral buds and pollen.</text>
</comment>
<comment type="domain">
    <text evidence="4">The EF-hand domains have high affinity for calcium.</text>
</comment>
<comment type="disruption phenotype">
    <text evidence="4">No visible phenotype.</text>
</comment>
<comment type="similarity">
    <text evidence="6">Belongs to the MICU1 family. MICU1 subfamily.</text>
</comment>
<name>MICU_ARATH</name>
<feature type="transit peptide" description="Mitochondrion" evidence="2">
    <location>
        <begin position="1"/>
        <end position="29"/>
    </location>
</feature>
<feature type="chain" id="PRO_0000438705" description="Calcium uptake protein, mitochondrial" evidence="2">
    <location>
        <begin position="30"/>
        <end position="498"/>
    </location>
</feature>
<feature type="domain" description="EF-hand 1" evidence="3">
    <location>
        <begin position="216"/>
        <end position="241"/>
    </location>
</feature>
<feature type="domain" description="EF-hand 2" evidence="3">
    <location>
        <begin position="243"/>
        <end position="278"/>
    </location>
</feature>
<feature type="domain" description="EF-hand 3" evidence="3">
    <location>
        <begin position="329"/>
        <end position="364"/>
    </location>
</feature>
<feature type="domain" description="EF-hand 4" evidence="3">
    <location>
        <begin position="437"/>
        <end position="472"/>
    </location>
</feature>
<feature type="binding site" evidence="3">
    <location>
        <position position="222"/>
    </location>
    <ligand>
        <name>Ca(2+)</name>
        <dbReference type="ChEBI" id="CHEBI:29108"/>
        <label>1</label>
    </ligand>
</feature>
<feature type="binding site" evidence="3">
    <location>
        <position position="224"/>
    </location>
    <ligand>
        <name>Ca(2+)</name>
        <dbReference type="ChEBI" id="CHEBI:29108"/>
        <label>1</label>
    </ligand>
</feature>
<feature type="binding site" evidence="3">
    <location>
        <position position="226"/>
    </location>
    <ligand>
        <name>Ca(2+)</name>
        <dbReference type="ChEBI" id="CHEBI:29108"/>
        <label>1</label>
    </ligand>
</feature>
<feature type="binding site" evidence="3">
    <location>
        <position position="233"/>
    </location>
    <ligand>
        <name>Ca(2+)</name>
        <dbReference type="ChEBI" id="CHEBI:29108"/>
        <label>1</label>
    </ligand>
</feature>
<feature type="binding site" evidence="3">
    <location>
        <position position="256"/>
    </location>
    <ligand>
        <name>Ca(2+)</name>
        <dbReference type="ChEBI" id="CHEBI:29108"/>
        <label>2</label>
    </ligand>
</feature>
<feature type="binding site" evidence="3">
    <location>
        <position position="258"/>
    </location>
    <ligand>
        <name>Ca(2+)</name>
        <dbReference type="ChEBI" id="CHEBI:29108"/>
        <label>2</label>
    </ligand>
</feature>
<feature type="binding site" evidence="3">
    <location>
        <position position="260"/>
    </location>
    <ligand>
        <name>Ca(2+)</name>
        <dbReference type="ChEBI" id="CHEBI:29108"/>
        <label>2</label>
    </ligand>
</feature>
<feature type="binding site" evidence="3">
    <location>
        <position position="262"/>
    </location>
    <ligand>
        <name>Ca(2+)</name>
        <dbReference type="ChEBI" id="CHEBI:29108"/>
        <label>2</label>
    </ligand>
</feature>
<feature type="binding site" evidence="3">
    <location>
        <position position="267"/>
    </location>
    <ligand>
        <name>Ca(2+)</name>
        <dbReference type="ChEBI" id="CHEBI:29108"/>
        <label>2</label>
    </ligand>
</feature>
<feature type="binding site" evidence="3">
    <location>
        <position position="450"/>
    </location>
    <ligand>
        <name>Ca(2+)</name>
        <dbReference type="ChEBI" id="CHEBI:29108"/>
        <label>3</label>
    </ligand>
</feature>
<feature type="binding site" evidence="3">
    <location>
        <position position="452"/>
    </location>
    <ligand>
        <name>Ca(2+)</name>
        <dbReference type="ChEBI" id="CHEBI:29108"/>
        <label>3</label>
    </ligand>
</feature>
<feature type="binding site" evidence="3">
    <location>
        <position position="454"/>
    </location>
    <ligand>
        <name>Ca(2+)</name>
        <dbReference type="ChEBI" id="CHEBI:29108"/>
        <label>3</label>
    </ligand>
</feature>
<feature type="binding site" evidence="3">
    <location>
        <position position="456"/>
    </location>
    <ligand>
        <name>Ca(2+)</name>
        <dbReference type="ChEBI" id="CHEBI:29108"/>
        <label>3</label>
    </ligand>
</feature>
<feature type="binding site" evidence="3">
    <location>
        <position position="461"/>
    </location>
    <ligand>
        <name>Ca(2+)</name>
        <dbReference type="ChEBI" id="CHEBI:29108"/>
        <label>3</label>
    </ligand>
</feature>
<feature type="splice variant" id="VSP_058723" description="In isoform 2.">
    <original>VCGITLSDNVIEIAFHVFDSNQD</original>
    <variation>REGRGTANCKRIVSVLLRWMEGF</variation>
    <location>
        <begin position="432"/>
        <end position="454"/>
    </location>
</feature>
<feature type="splice variant" id="VSP_058724" description="In isoform 2.">
    <location>
        <begin position="455"/>
        <end position="498"/>
    </location>
</feature>
<evidence type="ECO:0000250" key="1">
    <source>
        <dbReference type="UniProtKB" id="Q9BPX6"/>
    </source>
</evidence>
<evidence type="ECO:0000255" key="2"/>
<evidence type="ECO:0000255" key="3">
    <source>
        <dbReference type="PROSITE-ProRule" id="PRU00448"/>
    </source>
</evidence>
<evidence type="ECO:0000269" key="4">
    <source>
    </source>
</evidence>
<evidence type="ECO:0000303" key="5">
    <source>
    </source>
</evidence>
<evidence type="ECO:0000305" key="6"/>
<evidence type="ECO:0000312" key="7">
    <source>
        <dbReference type="Araport" id="AT4G32060"/>
    </source>
</evidence>
<evidence type="ECO:0000312" key="8">
    <source>
        <dbReference type="EMBL" id="CAA16584.1"/>
    </source>
</evidence>
<sequence length="498" mass="55415">MPALSHYRSVSSLPSVDRSFLLIQRLRIHGSSSSFPESSPSASILSGADPLKCTVSGGSLAKWITGISAGSALGFLYWSSGSSDSISGLFGGSNLLSFADSSTPSVCGVKVGDLKPRSFIPKLSLPGYSSGFIFGDAYRRKIFFNYEKRLRLQSPPEKVFEYFASVRTDKGEILMKPADLMRAIVPVFPPSESHLVREGYLTGERNPGELRCSPSEFFMLFDVDNDGLISFKEYIFFVTLLSIPESSFAVAFKMFDTDNNGEIDKEEFKTVMSLMRSQHRQGVGHRDGLRTGLHMTGSVEDGGLVEYFFGKDGSQKLKHDKFTKFMKDLTEEMLRLEFAHYDYKRRGSISAKDFALSMVAAADASHLSKLLDRVESLSEHPHLRDMRISLKEFKQFDELRSKLGPFSLALFAYGKANGLLTMKDFKRAASQVCGITLSDNVIEIAFHVFDSNQDGNLSVDEFLRVLHRRERDVAQPIAKGLSRYFSDGWKGSKNCSSS</sequence>